<gene>
    <name evidence="7" type="primary">Glb1-3</name>
    <name evidence="9" type="ordered locus">MTR_0026s0210</name>
    <name evidence="7" type="ordered locus">Medtr0026s0210</name>
</gene>
<dbReference type="EC" id="1.7.2.-" evidence="1"/>
<dbReference type="EMBL" id="KL402751">
    <property type="protein sequence ID" value="KEH17288.1"/>
    <property type="molecule type" value="Genomic_DNA"/>
</dbReference>
<dbReference type="RefSeq" id="XP_013443263.1">
    <property type="nucleotide sequence ID" value="XM_013587809.1"/>
</dbReference>
<dbReference type="SMR" id="A0A072TK64"/>
<dbReference type="STRING" id="3880.A0A072TK64"/>
<dbReference type="HOGENOM" id="CLU_795392_0_0_1"/>
<dbReference type="OrthoDB" id="436496at2759"/>
<dbReference type="Proteomes" id="UP000002051">
    <property type="component" value="Unassembled WGS sequence"/>
</dbReference>
<dbReference type="GO" id="GO:0005737">
    <property type="term" value="C:cytoplasm"/>
    <property type="evidence" value="ECO:0007669"/>
    <property type="project" value="UniProtKB-SubCell"/>
</dbReference>
<dbReference type="GO" id="GO:0005634">
    <property type="term" value="C:nucleus"/>
    <property type="evidence" value="ECO:0007669"/>
    <property type="project" value="UniProtKB-SubCell"/>
</dbReference>
<dbReference type="GO" id="GO:0020037">
    <property type="term" value="F:heme binding"/>
    <property type="evidence" value="ECO:0007669"/>
    <property type="project" value="InterPro"/>
</dbReference>
<dbReference type="GO" id="GO:0046872">
    <property type="term" value="F:metal ion binding"/>
    <property type="evidence" value="ECO:0007669"/>
    <property type="project" value="UniProtKB-KW"/>
</dbReference>
<dbReference type="GO" id="GO:0016491">
    <property type="term" value="F:oxidoreductase activity"/>
    <property type="evidence" value="ECO:0007669"/>
    <property type="project" value="UniProtKB-KW"/>
</dbReference>
<dbReference type="GO" id="GO:0019825">
    <property type="term" value="F:oxygen binding"/>
    <property type="evidence" value="ECO:0007669"/>
    <property type="project" value="InterPro"/>
</dbReference>
<dbReference type="GO" id="GO:0005344">
    <property type="term" value="F:oxygen carrier activity"/>
    <property type="evidence" value="ECO:0007669"/>
    <property type="project" value="UniProtKB-KW"/>
</dbReference>
<dbReference type="GO" id="GO:0071731">
    <property type="term" value="P:response to nitric oxide"/>
    <property type="evidence" value="ECO:0000270"/>
    <property type="project" value="UniProtKB"/>
</dbReference>
<dbReference type="Gene3D" id="1.10.490.10">
    <property type="entry name" value="Globins"/>
    <property type="match status" value="2"/>
</dbReference>
<dbReference type="InterPro" id="IPR000971">
    <property type="entry name" value="Globin"/>
</dbReference>
<dbReference type="InterPro" id="IPR009050">
    <property type="entry name" value="Globin-like_sf"/>
</dbReference>
<dbReference type="InterPro" id="IPR012292">
    <property type="entry name" value="Globin/Proto"/>
</dbReference>
<dbReference type="InterPro" id="IPR001032">
    <property type="entry name" value="Leghaemoglobin-like"/>
</dbReference>
<dbReference type="InterPro" id="IPR019824">
    <property type="entry name" value="Leghaemoglobin_Fe_BS"/>
</dbReference>
<dbReference type="PANTHER" id="PTHR22924">
    <property type="entry name" value="LEGHEMOGLOBIN-RELATED"/>
    <property type="match status" value="1"/>
</dbReference>
<dbReference type="PANTHER" id="PTHR22924:SF89">
    <property type="entry name" value="NON-SYMBIOTIC HEMOGLOBIN"/>
    <property type="match status" value="1"/>
</dbReference>
<dbReference type="Pfam" id="PF00042">
    <property type="entry name" value="Globin"/>
    <property type="match status" value="2"/>
</dbReference>
<dbReference type="PRINTS" id="PR00188">
    <property type="entry name" value="PLANTGLOBIN"/>
</dbReference>
<dbReference type="SUPFAM" id="SSF46458">
    <property type="entry name" value="Globin-like"/>
    <property type="match status" value="2"/>
</dbReference>
<dbReference type="PROSITE" id="PS01033">
    <property type="entry name" value="GLOBIN"/>
    <property type="match status" value="2"/>
</dbReference>
<dbReference type="PROSITE" id="PS00208">
    <property type="entry name" value="PLANT_GLOBIN"/>
    <property type="match status" value="2"/>
</dbReference>
<evidence type="ECO:0000250" key="1">
    <source>
        <dbReference type="UniProtKB" id="A0A072ULZ1"/>
    </source>
</evidence>
<evidence type="ECO:0000250" key="2">
    <source>
        <dbReference type="UniProtKB" id="A2XE98"/>
    </source>
</evidence>
<evidence type="ECO:0000250" key="3">
    <source>
        <dbReference type="UniProtKB" id="O04986"/>
    </source>
</evidence>
<evidence type="ECO:0000250" key="4">
    <source>
        <dbReference type="UniProtKB" id="P68168"/>
    </source>
</evidence>
<evidence type="ECO:0000255" key="5">
    <source>
        <dbReference type="PROSITE-ProRule" id="PRU00238"/>
    </source>
</evidence>
<evidence type="ECO:0000269" key="6">
    <source>
    </source>
</evidence>
<evidence type="ECO:0000303" key="7">
    <source>
    </source>
</evidence>
<evidence type="ECO:0000305" key="8"/>
<evidence type="ECO:0000312" key="9">
    <source>
        <dbReference type="EMBL" id="KEH17288.1"/>
    </source>
</evidence>
<protein>
    <recommendedName>
        <fullName evidence="3">Anaerobic nitrite reductase Glb1-3</fullName>
        <ecNumber evidence="1">1.7.2.-</ecNumber>
    </recommendedName>
    <alternativeName>
        <fullName evidence="7">Non-symbiotic hemoglobin 1-3</fullName>
        <shortName evidence="7">MtGlb1-3</shortName>
    </alternativeName>
    <alternativeName>
        <fullName evidence="7">Phytoglobin 1.3</fullName>
        <shortName evidence="7">Phytogb1.3</shortName>
    </alternativeName>
</protein>
<organism>
    <name type="scientific">Medicago truncatula</name>
    <name type="common">Barrel medic</name>
    <name type="synonym">Medicago tribuloides</name>
    <dbReference type="NCBI Taxonomy" id="3880"/>
    <lineage>
        <taxon>Eukaryota</taxon>
        <taxon>Viridiplantae</taxon>
        <taxon>Streptophyta</taxon>
        <taxon>Embryophyta</taxon>
        <taxon>Tracheophyta</taxon>
        <taxon>Spermatophyta</taxon>
        <taxon>Magnoliopsida</taxon>
        <taxon>eudicotyledons</taxon>
        <taxon>Gunneridae</taxon>
        <taxon>Pentapetalae</taxon>
        <taxon>rosids</taxon>
        <taxon>fabids</taxon>
        <taxon>Fabales</taxon>
        <taxon>Fabaceae</taxon>
        <taxon>Papilionoideae</taxon>
        <taxon>50 kb inversion clade</taxon>
        <taxon>NPAAA clade</taxon>
        <taxon>Hologalegina</taxon>
        <taxon>IRL clade</taxon>
        <taxon>Trifolieae</taxon>
        <taxon>Medicago</taxon>
    </lineage>
</organism>
<name>GLB13_MEDTR</name>
<reference key="1">
    <citation type="journal article" date="2011" name="Nature">
        <title>The Medicago genome provides insight into the evolution of rhizobial symbioses.</title>
        <authorList>
            <person name="Young N.D."/>
            <person name="Debelle F."/>
            <person name="Oldroyd G.E.D."/>
            <person name="Geurts R."/>
            <person name="Cannon S.B."/>
            <person name="Udvardi M.K."/>
            <person name="Benedito V.A."/>
            <person name="Mayer K.F.X."/>
            <person name="Gouzy J."/>
            <person name="Schoof H."/>
            <person name="Van de Peer Y."/>
            <person name="Proost S."/>
            <person name="Cook D.R."/>
            <person name="Meyers B.C."/>
            <person name="Spannagl M."/>
            <person name="Cheung F."/>
            <person name="De Mita S."/>
            <person name="Krishnakumar V."/>
            <person name="Gundlach H."/>
            <person name="Zhou S."/>
            <person name="Mudge J."/>
            <person name="Bharti A.K."/>
            <person name="Murray J.D."/>
            <person name="Naoumkina M.A."/>
            <person name="Rosen B."/>
            <person name="Silverstein K.A.T."/>
            <person name="Tang H."/>
            <person name="Rombauts S."/>
            <person name="Zhao P.X."/>
            <person name="Zhou P."/>
            <person name="Barbe V."/>
            <person name="Bardou P."/>
            <person name="Bechner M."/>
            <person name="Bellec A."/>
            <person name="Berger A."/>
            <person name="Berges H."/>
            <person name="Bidwell S."/>
            <person name="Bisseling T."/>
            <person name="Choisne N."/>
            <person name="Couloux A."/>
            <person name="Denny R."/>
            <person name="Deshpande S."/>
            <person name="Dai X."/>
            <person name="Doyle J.J."/>
            <person name="Dudez A.-M."/>
            <person name="Farmer A.D."/>
            <person name="Fouteau S."/>
            <person name="Franken C."/>
            <person name="Gibelin C."/>
            <person name="Gish J."/>
            <person name="Goldstein S."/>
            <person name="Gonzalez A.J."/>
            <person name="Green P.J."/>
            <person name="Hallab A."/>
            <person name="Hartog M."/>
            <person name="Hua A."/>
            <person name="Humphray S.J."/>
            <person name="Jeong D.-H."/>
            <person name="Jing Y."/>
            <person name="Jocker A."/>
            <person name="Kenton S.M."/>
            <person name="Kim D.-J."/>
            <person name="Klee K."/>
            <person name="Lai H."/>
            <person name="Lang C."/>
            <person name="Lin S."/>
            <person name="Macmil S.L."/>
            <person name="Magdelenat G."/>
            <person name="Matthews L."/>
            <person name="McCorrison J."/>
            <person name="Monaghan E.L."/>
            <person name="Mun J.-H."/>
            <person name="Najar F.Z."/>
            <person name="Nicholson C."/>
            <person name="Noirot C."/>
            <person name="O'Bleness M."/>
            <person name="Paule C.R."/>
            <person name="Poulain J."/>
            <person name="Prion F."/>
            <person name="Qin B."/>
            <person name="Qu C."/>
            <person name="Retzel E.F."/>
            <person name="Riddle C."/>
            <person name="Sallet E."/>
            <person name="Samain S."/>
            <person name="Samson N."/>
            <person name="Sanders I."/>
            <person name="Saurat O."/>
            <person name="Scarpelli C."/>
            <person name="Schiex T."/>
            <person name="Segurens B."/>
            <person name="Severin A.J."/>
            <person name="Sherrier D.J."/>
            <person name="Shi R."/>
            <person name="Sims S."/>
            <person name="Singer S.R."/>
            <person name="Sinharoy S."/>
            <person name="Sterck L."/>
            <person name="Viollet A."/>
            <person name="Wang B.-B."/>
            <person name="Wang K."/>
            <person name="Wang M."/>
            <person name="Wang X."/>
            <person name="Warfsmann J."/>
            <person name="Weissenbach J."/>
            <person name="White D.D."/>
            <person name="White J.D."/>
            <person name="Wiley G.B."/>
            <person name="Wincker P."/>
            <person name="Xing Y."/>
            <person name="Yang L."/>
            <person name="Yao Z."/>
            <person name="Ying F."/>
            <person name="Zhai J."/>
            <person name="Zhou L."/>
            <person name="Zuber A."/>
            <person name="Denarie J."/>
            <person name="Dixon R.A."/>
            <person name="May G.D."/>
            <person name="Schwartz D.C."/>
            <person name="Rogers J."/>
            <person name="Quetier F."/>
            <person name="Town C.D."/>
            <person name="Roe B.A."/>
        </authorList>
    </citation>
    <scope>NUCLEOTIDE SEQUENCE [LARGE SCALE GENOMIC DNA]</scope>
    <source>
        <strain>cv. Jemalong A17</strain>
    </source>
</reference>
<reference key="2">
    <citation type="journal article" date="2014" name="BMC Genomics">
        <title>An improved genome release (version Mt4.0) for the model legume Medicago truncatula.</title>
        <authorList>
            <person name="Tang H."/>
            <person name="Krishnakumar V."/>
            <person name="Bidwell S."/>
            <person name="Rosen B."/>
            <person name="Chan A."/>
            <person name="Zhou S."/>
            <person name="Gentzbittel L."/>
            <person name="Childs K.L."/>
            <person name="Yandell M."/>
            <person name="Gundlach H."/>
            <person name="Mayer K.F."/>
            <person name="Schwartz D.C."/>
            <person name="Town C.D."/>
        </authorList>
    </citation>
    <scope>GENOME REANNOTATION</scope>
    <source>
        <strain>cv. Jemalong A17</strain>
    </source>
</reference>
<reference key="3">
    <citation type="journal article" date="2020" name="New Phytol.">
        <title>Medicago truncatula Phytoglobin 1.1 controls symbiotic nodulation and nitrogen fixation via the regulation of nitric oxide concentration.</title>
        <authorList>
            <person name="Berger A."/>
            <person name="Guinand S."/>
            <person name="Boscari A."/>
            <person name="Puppo A."/>
            <person name="Brouquisse R."/>
        </authorList>
    </citation>
    <scope>DEVELOPMENTAL STAGE</scope>
    <scope>INDUCTION BY NITRIC OXIDE</scope>
    <scope>GENE FAMILY</scope>
    <scope>NOMENCLATURE</scope>
    <source>
        <strain>cv. Jemalong A17</strain>
    </source>
</reference>
<comment type="function">
    <text evidence="1 3">Phytoglobin that regulates the fine tuning of nitric oxide (NO) concentration in the cytosol in response to sudden changes in O(2) availability, and performs both symbiotic and nonsymbiotic functions (By similarity). Exhibits NO dioxygenase activity in the presence of O(2) but nitrite reductase (NiR) activity in the absence of O(2) (e.g. during flooding or in waterlogged soil) (By similarity). May not function as an oxygen storage or transport protein (By similarity). Extremely reactive toward the physiological ligands O(2), nitric oxide (NO), and nitrite with a very high affinity for O(2) through an hexacoordinate heme iron because of a very low dissociation constant (By similarity).</text>
</comment>
<comment type="catalytic activity">
    <reaction evidence="1">
        <text>Fe(III)-heme b-[protein] + nitric oxide + H2O = Fe(II)-heme b-[protein] + nitrite + 2 H(+)</text>
        <dbReference type="Rhea" id="RHEA:77711"/>
        <dbReference type="Rhea" id="RHEA-COMP:18975"/>
        <dbReference type="Rhea" id="RHEA-COMP:18976"/>
        <dbReference type="ChEBI" id="CHEBI:15377"/>
        <dbReference type="ChEBI" id="CHEBI:15378"/>
        <dbReference type="ChEBI" id="CHEBI:16301"/>
        <dbReference type="ChEBI" id="CHEBI:16480"/>
        <dbReference type="ChEBI" id="CHEBI:55376"/>
        <dbReference type="ChEBI" id="CHEBI:60344"/>
    </reaction>
    <physiologicalReaction direction="left-to-right" evidence="1">
        <dbReference type="Rhea" id="RHEA:77712"/>
    </physiologicalReaction>
    <physiologicalReaction direction="right-to-left" evidence="1">
        <dbReference type="Rhea" id="RHEA:77713"/>
    </physiologicalReaction>
</comment>
<comment type="cofactor">
    <cofactor evidence="1">
        <name>heme b</name>
        <dbReference type="ChEBI" id="CHEBI:60344"/>
    </cofactor>
    <text evidence="1">Binds 2 heme groups per subunit.</text>
</comment>
<comment type="subunit">
    <text evidence="8">Monomer.</text>
</comment>
<comment type="subcellular location">
    <subcellularLocation>
        <location evidence="2">Cytoplasm</location>
    </subcellularLocation>
    <subcellularLocation>
        <location evidence="2">Nucleus</location>
    </subcellularLocation>
</comment>
<comment type="developmental stage">
    <text evidence="6">During root nodulation, accumulates at the onset of nodule senescence.</text>
</comment>
<comment type="induction">
    <text evidence="6">Regulated by nitric oxide (NO), particularly during nodulation mediated by Sinorhizobium meliloti inoculation.</text>
</comment>
<comment type="similarity">
    <text evidence="8">Belongs to the plant globin family.</text>
</comment>
<feature type="chain" id="PRO_0000460307" description="Anaerobic nitrite reductase Glb1-3">
    <location>
        <begin position="1"/>
        <end position="349"/>
    </location>
</feature>
<feature type="domain" description="Globin 1" evidence="5">
    <location>
        <begin position="13"/>
        <end position="162"/>
    </location>
</feature>
<feature type="domain" description="Globin 2" evidence="5">
    <location>
        <begin position="184"/>
        <end position="333"/>
    </location>
</feature>
<feature type="binding site" evidence="4">
    <location>
        <position position="56"/>
    </location>
    <ligand>
        <name>heme b</name>
        <dbReference type="ChEBI" id="CHEBI:60344"/>
        <label>1</label>
    </ligand>
</feature>
<feature type="binding site" evidence="3">
    <location>
        <position position="70"/>
    </location>
    <ligand>
        <name>heme b</name>
        <dbReference type="ChEBI" id="CHEBI:60344"/>
        <label>1</label>
    </ligand>
</feature>
<feature type="binding site" description="distal binding residue" evidence="5">
    <location>
        <position position="74"/>
    </location>
    <ligand>
        <name>heme b</name>
        <dbReference type="ChEBI" id="CHEBI:60344"/>
        <label>1</label>
    </ligand>
    <ligandPart>
        <name>Fe</name>
        <dbReference type="ChEBI" id="CHEBI:18248"/>
    </ligandPart>
</feature>
<feature type="binding site" evidence="3">
    <location>
        <position position="104"/>
    </location>
    <ligand>
        <name>heme b</name>
        <dbReference type="ChEBI" id="CHEBI:60344"/>
        <label>1</label>
    </ligand>
</feature>
<feature type="binding site" evidence="3">
    <location>
        <position position="108"/>
    </location>
    <ligand>
        <name>heme b</name>
        <dbReference type="ChEBI" id="CHEBI:60344"/>
        <label>1</label>
    </ligand>
</feature>
<feature type="binding site" description="proximal binding residue" evidence="5">
    <location>
        <position position="109"/>
    </location>
    <ligand>
        <name>heme b</name>
        <dbReference type="ChEBI" id="CHEBI:60344"/>
        <label>1</label>
    </ligand>
    <ligandPart>
        <name>Fe</name>
        <dbReference type="ChEBI" id="CHEBI:18248"/>
    </ligandPart>
</feature>
<feature type="binding site" evidence="4">
    <location>
        <position position="227"/>
    </location>
    <ligand>
        <name>heme b</name>
        <dbReference type="ChEBI" id="CHEBI:60344"/>
        <label>2</label>
    </ligand>
</feature>
<feature type="binding site" evidence="3">
    <location>
        <position position="241"/>
    </location>
    <ligand>
        <name>heme b</name>
        <dbReference type="ChEBI" id="CHEBI:60344"/>
        <label>2</label>
    </ligand>
</feature>
<feature type="binding site" description="distal binding residue" evidence="5">
    <location>
        <position position="245"/>
    </location>
    <ligand>
        <name>heme b</name>
        <dbReference type="ChEBI" id="CHEBI:60344"/>
        <label>2</label>
    </ligand>
    <ligandPart>
        <name>Fe</name>
        <dbReference type="ChEBI" id="CHEBI:18248"/>
    </ligandPart>
</feature>
<feature type="binding site" evidence="3">
    <location>
        <position position="275"/>
    </location>
    <ligand>
        <name>heme b</name>
        <dbReference type="ChEBI" id="CHEBI:60344"/>
        <label>2</label>
    </ligand>
</feature>
<feature type="binding site" evidence="3">
    <location>
        <position position="279"/>
    </location>
    <ligand>
        <name>heme b</name>
        <dbReference type="ChEBI" id="CHEBI:60344"/>
        <label>2</label>
    </ligand>
</feature>
<feature type="binding site" description="proximal binding residue" evidence="5">
    <location>
        <position position="280"/>
    </location>
    <ligand>
        <name>heme b</name>
        <dbReference type="ChEBI" id="CHEBI:60344"/>
        <label>2</label>
    </ligand>
    <ligandPart>
        <name>Fe</name>
        <dbReference type="ChEBI" id="CHEBI:18248"/>
    </ligandPart>
</feature>
<proteinExistence type="evidence at transcript level"/>
<sequence>MEENKKTMEKSVGFTEEQDALVVKSWNAMKKNSGDLSLKFFKKILEIAPPAKQMFSFLKDSNVPLEHNPKLKPHAMSVFLMTCESAVQLRKAGKVTVRESNLKKLGATHFKTGVQDEHFEVTKQALLETIEEAIPEMWYPAMKNAWAEAHDRLANAIKAEMKEAHDQLDSANLIINMEENTGSCFTEEQEALVVKSWNAIKNNSEDLSLKFFKRIFEIAPPAKQLFSFLRDSNVPLEQNPKLKPHAMSVFLMTCESAVQLRKAGKVTVSESNLKKLGATHFKSGVKDEHFEVTKQVLLETIKEALPEMWSPAMENAWGEAHDQLANAIKAEMKKADHDHQANVEDKPSS</sequence>
<keyword id="KW-0963">Cytoplasm</keyword>
<keyword id="KW-0349">Heme</keyword>
<keyword id="KW-0408">Iron</keyword>
<keyword id="KW-0479">Metal-binding</keyword>
<keyword id="KW-0539">Nucleus</keyword>
<keyword id="KW-0560">Oxidoreductase</keyword>
<keyword id="KW-0561">Oxygen transport</keyword>
<keyword id="KW-1185">Reference proteome</keyword>
<keyword id="KW-0813">Transport</keyword>
<accession>A0A072TK64</accession>